<accession>A1JLB3</accession>
<protein>
    <recommendedName>
        <fullName evidence="1">Glutamate--tRNA ligase</fullName>
        <ecNumber evidence="1">6.1.1.17</ecNumber>
    </recommendedName>
    <alternativeName>
        <fullName evidence="1">Glutamyl-tRNA synthetase</fullName>
        <shortName evidence="1">GluRS</shortName>
    </alternativeName>
</protein>
<evidence type="ECO:0000255" key="1">
    <source>
        <dbReference type="HAMAP-Rule" id="MF_00022"/>
    </source>
</evidence>
<proteinExistence type="inferred from homology"/>
<name>SYE_YERE8</name>
<sequence length="471" mass="53189">MKIKTRFAPSPTGYLHVGGARTALYSWLFTRHFGGEFVLRIEDTDLERSTQEAIDAIMDGMNWLNLDWDEGPYFQTKRFDRYNAVIDQMLENGTAYRCYCSKERLDELREAQMTNGEKPRYDGRCRDSQCTHGADEPSVVRFRNPQAGSVIFNDKIRGPIEFSNQELDDLIIRRTDGSPTYNFCVVVDDWDMEITHVIRGEDHINNTPRQINILKALGAPVPEYAHVSMILGDDGKKLSKRHGAVGVMQYRDDGYLPEALLNYLVRLGWSHGDQEIFSVAEMTELFTLDAVSKSASAFNTEKLQWLNHHYINSLPPEQVAVHLSWQVEQLGIDTRNGPELVEIVKLLGERCKTLKEMAESCRYFYEEFDEFDADAAKKHLRPVARQPLEAVKAKLAAITEWTTENVHNAIQGTADELGVGMGKVGMPLRVAVTGAGQSPGMDVTVHAIGQARSLSRIDKALAFISEREAQQ</sequence>
<gene>
    <name evidence="1" type="primary">gltX</name>
    <name type="ordered locus">YE1215</name>
</gene>
<comment type="function">
    <text evidence="1">Catalyzes the attachment of glutamate to tRNA(Glu) in a two-step reaction: glutamate is first activated by ATP to form Glu-AMP and then transferred to the acceptor end of tRNA(Glu).</text>
</comment>
<comment type="catalytic activity">
    <reaction evidence="1">
        <text>tRNA(Glu) + L-glutamate + ATP = L-glutamyl-tRNA(Glu) + AMP + diphosphate</text>
        <dbReference type="Rhea" id="RHEA:23540"/>
        <dbReference type="Rhea" id="RHEA-COMP:9663"/>
        <dbReference type="Rhea" id="RHEA-COMP:9680"/>
        <dbReference type="ChEBI" id="CHEBI:29985"/>
        <dbReference type="ChEBI" id="CHEBI:30616"/>
        <dbReference type="ChEBI" id="CHEBI:33019"/>
        <dbReference type="ChEBI" id="CHEBI:78442"/>
        <dbReference type="ChEBI" id="CHEBI:78520"/>
        <dbReference type="ChEBI" id="CHEBI:456215"/>
        <dbReference type="EC" id="6.1.1.17"/>
    </reaction>
</comment>
<comment type="cofactor">
    <cofactor evidence="1">
        <name>Zn(2+)</name>
        <dbReference type="ChEBI" id="CHEBI:29105"/>
    </cofactor>
    <text evidence="1">Binds 1 zinc ion per subunit.</text>
</comment>
<comment type="subunit">
    <text evidence="1">Monomer.</text>
</comment>
<comment type="subcellular location">
    <subcellularLocation>
        <location evidence="1">Cytoplasm</location>
    </subcellularLocation>
</comment>
<comment type="similarity">
    <text evidence="1">Belongs to the class-I aminoacyl-tRNA synthetase family. Glutamate--tRNA ligase type 1 subfamily.</text>
</comment>
<feature type="chain" id="PRO_1000001984" description="Glutamate--tRNA ligase">
    <location>
        <begin position="1"/>
        <end position="471"/>
    </location>
</feature>
<feature type="short sequence motif" description="'HIGH' region" evidence="1">
    <location>
        <begin position="9"/>
        <end position="19"/>
    </location>
</feature>
<feature type="short sequence motif" description="'KMSKS' region" evidence="1">
    <location>
        <begin position="237"/>
        <end position="241"/>
    </location>
</feature>
<feature type="binding site" evidence="1">
    <location>
        <position position="98"/>
    </location>
    <ligand>
        <name>Zn(2+)</name>
        <dbReference type="ChEBI" id="CHEBI:29105"/>
    </ligand>
</feature>
<feature type="binding site" evidence="1">
    <location>
        <position position="100"/>
    </location>
    <ligand>
        <name>Zn(2+)</name>
        <dbReference type="ChEBI" id="CHEBI:29105"/>
    </ligand>
</feature>
<feature type="binding site" evidence="1">
    <location>
        <position position="125"/>
    </location>
    <ligand>
        <name>Zn(2+)</name>
        <dbReference type="ChEBI" id="CHEBI:29105"/>
    </ligand>
</feature>
<feature type="binding site" evidence="1">
    <location>
        <position position="127"/>
    </location>
    <ligand>
        <name>Zn(2+)</name>
        <dbReference type="ChEBI" id="CHEBI:29105"/>
    </ligand>
</feature>
<feature type="binding site" evidence="1">
    <location>
        <position position="240"/>
    </location>
    <ligand>
        <name>ATP</name>
        <dbReference type="ChEBI" id="CHEBI:30616"/>
    </ligand>
</feature>
<reference key="1">
    <citation type="journal article" date="2006" name="PLoS Genet.">
        <title>The complete genome sequence and comparative genome analysis of the high pathogenicity Yersinia enterocolitica strain 8081.</title>
        <authorList>
            <person name="Thomson N.R."/>
            <person name="Howard S."/>
            <person name="Wren B.W."/>
            <person name="Holden M.T.G."/>
            <person name="Crossman L."/>
            <person name="Challis G.L."/>
            <person name="Churcher C."/>
            <person name="Mungall K."/>
            <person name="Brooks K."/>
            <person name="Chillingworth T."/>
            <person name="Feltwell T."/>
            <person name="Abdellah Z."/>
            <person name="Hauser H."/>
            <person name="Jagels K."/>
            <person name="Maddison M."/>
            <person name="Moule S."/>
            <person name="Sanders M."/>
            <person name="Whitehead S."/>
            <person name="Quail M.A."/>
            <person name="Dougan G."/>
            <person name="Parkhill J."/>
            <person name="Prentice M.B."/>
        </authorList>
    </citation>
    <scope>NUCLEOTIDE SEQUENCE [LARGE SCALE GENOMIC DNA]</scope>
    <source>
        <strain>NCTC 13174 / 8081</strain>
    </source>
</reference>
<organism>
    <name type="scientific">Yersinia enterocolitica serotype O:8 / biotype 1B (strain NCTC 13174 / 8081)</name>
    <dbReference type="NCBI Taxonomy" id="393305"/>
    <lineage>
        <taxon>Bacteria</taxon>
        <taxon>Pseudomonadati</taxon>
        <taxon>Pseudomonadota</taxon>
        <taxon>Gammaproteobacteria</taxon>
        <taxon>Enterobacterales</taxon>
        <taxon>Yersiniaceae</taxon>
        <taxon>Yersinia</taxon>
    </lineage>
</organism>
<dbReference type="EC" id="6.1.1.17" evidence="1"/>
<dbReference type="EMBL" id="AM286415">
    <property type="protein sequence ID" value="CAL11308.1"/>
    <property type="molecule type" value="Genomic_DNA"/>
</dbReference>
<dbReference type="RefSeq" id="WP_011815864.1">
    <property type="nucleotide sequence ID" value="NC_008800.1"/>
</dbReference>
<dbReference type="RefSeq" id="YP_001005540.1">
    <property type="nucleotide sequence ID" value="NC_008800.1"/>
</dbReference>
<dbReference type="SMR" id="A1JLB3"/>
<dbReference type="KEGG" id="yen:YE1215"/>
<dbReference type="PATRIC" id="fig|393305.7.peg.1320"/>
<dbReference type="eggNOG" id="COG0008">
    <property type="taxonomic scope" value="Bacteria"/>
</dbReference>
<dbReference type="HOGENOM" id="CLU_015768_6_0_6"/>
<dbReference type="OrthoDB" id="9807503at2"/>
<dbReference type="Proteomes" id="UP000000642">
    <property type="component" value="Chromosome"/>
</dbReference>
<dbReference type="GO" id="GO:0005829">
    <property type="term" value="C:cytosol"/>
    <property type="evidence" value="ECO:0007669"/>
    <property type="project" value="TreeGrafter"/>
</dbReference>
<dbReference type="GO" id="GO:0005524">
    <property type="term" value="F:ATP binding"/>
    <property type="evidence" value="ECO:0007669"/>
    <property type="project" value="UniProtKB-UniRule"/>
</dbReference>
<dbReference type="GO" id="GO:0004818">
    <property type="term" value="F:glutamate-tRNA ligase activity"/>
    <property type="evidence" value="ECO:0007669"/>
    <property type="project" value="UniProtKB-UniRule"/>
</dbReference>
<dbReference type="GO" id="GO:0000049">
    <property type="term" value="F:tRNA binding"/>
    <property type="evidence" value="ECO:0007669"/>
    <property type="project" value="InterPro"/>
</dbReference>
<dbReference type="GO" id="GO:0008270">
    <property type="term" value="F:zinc ion binding"/>
    <property type="evidence" value="ECO:0007669"/>
    <property type="project" value="UniProtKB-UniRule"/>
</dbReference>
<dbReference type="GO" id="GO:0006424">
    <property type="term" value="P:glutamyl-tRNA aminoacylation"/>
    <property type="evidence" value="ECO:0007669"/>
    <property type="project" value="UniProtKB-UniRule"/>
</dbReference>
<dbReference type="CDD" id="cd00808">
    <property type="entry name" value="GluRS_core"/>
    <property type="match status" value="1"/>
</dbReference>
<dbReference type="FunFam" id="1.10.10.350:FF:000001">
    <property type="entry name" value="Glutamate--tRNA ligase"/>
    <property type="match status" value="1"/>
</dbReference>
<dbReference type="FunFam" id="3.40.50.620:FF:000007">
    <property type="entry name" value="Glutamate--tRNA ligase"/>
    <property type="match status" value="1"/>
</dbReference>
<dbReference type="Gene3D" id="1.10.10.350">
    <property type="match status" value="1"/>
</dbReference>
<dbReference type="Gene3D" id="3.40.50.620">
    <property type="entry name" value="HUPs"/>
    <property type="match status" value="1"/>
</dbReference>
<dbReference type="HAMAP" id="MF_00022">
    <property type="entry name" value="Glu_tRNA_synth_type1"/>
    <property type="match status" value="1"/>
</dbReference>
<dbReference type="InterPro" id="IPR045462">
    <property type="entry name" value="aa-tRNA-synth_I_cd-bd"/>
</dbReference>
<dbReference type="InterPro" id="IPR020751">
    <property type="entry name" value="aa-tRNA-synth_I_codon-bd_sub2"/>
</dbReference>
<dbReference type="InterPro" id="IPR001412">
    <property type="entry name" value="aa-tRNA-synth_I_CS"/>
</dbReference>
<dbReference type="InterPro" id="IPR008925">
    <property type="entry name" value="aa_tRNA-synth_I_cd-bd_sf"/>
</dbReference>
<dbReference type="InterPro" id="IPR004527">
    <property type="entry name" value="Glu-tRNA-ligase_bac/mito"/>
</dbReference>
<dbReference type="InterPro" id="IPR000924">
    <property type="entry name" value="Glu/Gln-tRNA-synth"/>
</dbReference>
<dbReference type="InterPro" id="IPR020058">
    <property type="entry name" value="Glu/Gln-tRNA-synth_Ib_cat-dom"/>
</dbReference>
<dbReference type="InterPro" id="IPR049940">
    <property type="entry name" value="GluQ/Sye"/>
</dbReference>
<dbReference type="InterPro" id="IPR033910">
    <property type="entry name" value="GluRS_core"/>
</dbReference>
<dbReference type="InterPro" id="IPR014729">
    <property type="entry name" value="Rossmann-like_a/b/a_fold"/>
</dbReference>
<dbReference type="NCBIfam" id="TIGR00464">
    <property type="entry name" value="gltX_bact"/>
    <property type="match status" value="1"/>
</dbReference>
<dbReference type="PANTHER" id="PTHR43311">
    <property type="entry name" value="GLUTAMATE--TRNA LIGASE"/>
    <property type="match status" value="1"/>
</dbReference>
<dbReference type="PANTHER" id="PTHR43311:SF2">
    <property type="entry name" value="GLUTAMATE--TRNA LIGASE, MITOCHONDRIAL-RELATED"/>
    <property type="match status" value="1"/>
</dbReference>
<dbReference type="Pfam" id="PF19269">
    <property type="entry name" value="Anticodon_2"/>
    <property type="match status" value="1"/>
</dbReference>
<dbReference type="Pfam" id="PF00749">
    <property type="entry name" value="tRNA-synt_1c"/>
    <property type="match status" value="1"/>
</dbReference>
<dbReference type="PRINTS" id="PR00987">
    <property type="entry name" value="TRNASYNTHGLU"/>
</dbReference>
<dbReference type="SUPFAM" id="SSF48163">
    <property type="entry name" value="An anticodon-binding domain of class I aminoacyl-tRNA synthetases"/>
    <property type="match status" value="1"/>
</dbReference>
<dbReference type="SUPFAM" id="SSF52374">
    <property type="entry name" value="Nucleotidylyl transferase"/>
    <property type="match status" value="1"/>
</dbReference>
<dbReference type="PROSITE" id="PS00178">
    <property type="entry name" value="AA_TRNA_LIGASE_I"/>
    <property type="match status" value="1"/>
</dbReference>
<keyword id="KW-0030">Aminoacyl-tRNA synthetase</keyword>
<keyword id="KW-0067">ATP-binding</keyword>
<keyword id="KW-0963">Cytoplasm</keyword>
<keyword id="KW-0436">Ligase</keyword>
<keyword id="KW-0479">Metal-binding</keyword>
<keyword id="KW-0547">Nucleotide-binding</keyword>
<keyword id="KW-0648">Protein biosynthesis</keyword>
<keyword id="KW-0862">Zinc</keyword>